<evidence type="ECO:0000255" key="1">
    <source>
        <dbReference type="HAMAP-Rule" id="MF_01824"/>
    </source>
</evidence>
<keyword id="KW-0456">Lyase</keyword>
<keyword id="KW-0663">Pyridoxal phosphate</keyword>
<keyword id="KW-0704">Schiff base</keyword>
<organism>
    <name type="scientific">Staphylococcus aureus (strain MSSA476)</name>
    <dbReference type="NCBI Taxonomy" id="282459"/>
    <lineage>
        <taxon>Bacteria</taxon>
        <taxon>Bacillati</taxon>
        <taxon>Bacillota</taxon>
        <taxon>Bacilli</taxon>
        <taxon>Bacillales</taxon>
        <taxon>Staphylococcaceae</taxon>
        <taxon>Staphylococcus</taxon>
    </lineage>
</organism>
<reference key="1">
    <citation type="journal article" date="2004" name="Proc. Natl. Acad. Sci. U.S.A.">
        <title>Complete genomes of two clinical Staphylococcus aureus strains: evidence for the rapid evolution of virulence and drug resistance.</title>
        <authorList>
            <person name="Holden M.T.G."/>
            <person name="Feil E.J."/>
            <person name="Lindsay J.A."/>
            <person name="Peacock S.J."/>
            <person name="Day N.P.J."/>
            <person name="Enright M.C."/>
            <person name="Foster T.J."/>
            <person name="Moore C.E."/>
            <person name="Hurst L."/>
            <person name="Atkin R."/>
            <person name="Barron A."/>
            <person name="Bason N."/>
            <person name="Bentley S.D."/>
            <person name="Chillingworth C."/>
            <person name="Chillingworth T."/>
            <person name="Churcher C."/>
            <person name="Clark L."/>
            <person name="Corton C."/>
            <person name="Cronin A."/>
            <person name="Doggett J."/>
            <person name="Dowd L."/>
            <person name="Feltwell T."/>
            <person name="Hance Z."/>
            <person name="Harris B."/>
            <person name="Hauser H."/>
            <person name="Holroyd S."/>
            <person name="Jagels K."/>
            <person name="James K.D."/>
            <person name="Lennard N."/>
            <person name="Line A."/>
            <person name="Mayes R."/>
            <person name="Moule S."/>
            <person name="Mungall K."/>
            <person name="Ormond D."/>
            <person name="Quail M.A."/>
            <person name="Rabbinowitsch E."/>
            <person name="Rutherford K.M."/>
            <person name="Sanders M."/>
            <person name="Sharp S."/>
            <person name="Simmonds M."/>
            <person name="Stevens K."/>
            <person name="Whitehead S."/>
            <person name="Barrell B.G."/>
            <person name="Spratt B.G."/>
            <person name="Parkhill J."/>
        </authorList>
    </citation>
    <scope>NUCLEOTIDE SEQUENCE [LARGE SCALE GENOMIC DNA]</scope>
    <source>
        <strain>MSSA476</strain>
    </source>
</reference>
<protein>
    <recommendedName>
        <fullName evidence="1">Pyridoxal 5'-phosphate synthase subunit PdxS</fullName>
        <shortName evidence="1">PLP synthase subunit PdxS</shortName>
        <ecNumber evidence="1">4.3.3.6</ecNumber>
    </recommendedName>
    <alternativeName>
        <fullName evidence="1">Pdx1</fullName>
    </alternativeName>
</protein>
<dbReference type="EC" id="4.3.3.6" evidence="1"/>
<dbReference type="EMBL" id="BX571857">
    <property type="protein sequence ID" value="CAG42251.1"/>
    <property type="molecule type" value="Genomic_DNA"/>
</dbReference>
<dbReference type="RefSeq" id="WP_000034728.1">
    <property type="nucleotide sequence ID" value="NC_002953.3"/>
</dbReference>
<dbReference type="SMR" id="Q6GBW9"/>
<dbReference type="GeneID" id="66838811"/>
<dbReference type="KEGG" id="sas:SAS0476"/>
<dbReference type="HOGENOM" id="CLU_055352_1_0_9"/>
<dbReference type="UniPathway" id="UPA00245"/>
<dbReference type="GO" id="GO:0036381">
    <property type="term" value="F:pyridoxal 5'-phosphate synthase (glutamine hydrolysing) activity"/>
    <property type="evidence" value="ECO:0007669"/>
    <property type="project" value="UniProtKB-UniRule"/>
</dbReference>
<dbReference type="GO" id="GO:0006520">
    <property type="term" value="P:amino acid metabolic process"/>
    <property type="evidence" value="ECO:0007669"/>
    <property type="project" value="TreeGrafter"/>
</dbReference>
<dbReference type="GO" id="GO:0042823">
    <property type="term" value="P:pyridoxal phosphate biosynthetic process"/>
    <property type="evidence" value="ECO:0007669"/>
    <property type="project" value="UniProtKB-UniRule"/>
</dbReference>
<dbReference type="GO" id="GO:0008615">
    <property type="term" value="P:pyridoxine biosynthetic process"/>
    <property type="evidence" value="ECO:0007669"/>
    <property type="project" value="TreeGrafter"/>
</dbReference>
<dbReference type="CDD" id="cd04727">
    <property type="entry name" value="pdxS"/>
    <property type="match status" value="1"/>
</dbReference>
<dbReference type="FunFam" id="3.20.20.70:FF:000001">
    <property type="entry name" value="Pyridoxine biosynthesis protein PDX1"/>
    <property type="match status" value="1"/>
</dbReference>
<dbReference type="Gene3D" id="3.20.20.70">
    <property type="entry name" value="Aldolase class I"/>
    <property type="match status" value="1"/>
</dbReference>
<dbReference type="HAMAP" id="MF_01824">
    <property type="entry name" value="PdxS"/>
    <property type="match status" value="1"/>
</dbReference>
<dbReference type="InterPro" id="IPR013785">
    <property type="entry name" value="Aldolase_TIM"/>
</dbReference>
<dbReference type="InterPro" id="IPR001852">
    <property type="entry name" value="PdxS/SNZ"/>
</dbReference>
<dbReference type="InterPro" id="IPR033755">
    <property type="entry name" value="PdxS/SNZ_N"/>
</dbReference>
<dbReference type="InterPro" id="IPR011060">
    <property type="entry name" value="RibuloseP-bd_barrel"/>
</dbReference>
<dbReference type="NCBIfam" id="NF003215">
    <property type="entry name" value="PRK04180.1"/>
    <property type="match status" value="1"/>
</dbReference>
<dbReference type="NCBIfam" id="TIGR00343">
    <property type="entry name" value="pyridoxal 5'-phosphate synthase lyase subunit PdxS"/>
    <property type="match status" value="1"/>
</dbReference>
<dbReference type="PANTHER" id="PTHR31829">
    <property type="entry name" value="PYRIDOXAL 5'-PHOSPHATE SYNTHASE SUBUNIT SNZ1-RELATED"/>
    <property type="match status" value="1"/>
</dbReference>
<dbReference type="PANTHER" id="PTHR31829:SF0">
    <property type="entry name" value="PYRIDOXAL 5'-PHOSPHATE SYNTHASE SUBUNIT SNZ1-RELATED"/>
    <property type="match status" value="1"/>
</dbReference>
<dbReference type="Pfam" id="PF01680">
    <property type="entry name" value="SOR_SNZ"/>
    <property type="match status" value="1"/>
</dbReference>
<dbReference type="PIRSF" id="PIRSF029271">
    <property type="entry name" value="Pdx1"/>
    <property type="match status" value="1"/>
</dbReference>
<dbReference type="SUPFAM" id="SSF51366">
    <property type="entry name" value="Ribulose-phoshate binding barrel"/>
    <property type="match status" value="1"/>
</dbReference>
<dbReference type="PROSITE" id="PS01235">
    <property type="entry name" value="PDXS_SNZ_1"/>
    <property type="match status" value="1"/>
</dbReference>
<dbReference type="PROSITE" id="PS51129">
    <property type="entry name" value="PDXS_SNZ_2"/>
    <property type="match status" value="1"/>
</dbReference>
<name>PDXS_STAAS</name>
<gene>
    <name evidence="1" type="primary">pdxS</name>
    <name type="ordered locus">SAS0476</name>
</gene>
<comment type="function">
    <text evidence="1">Catalyzes the formation of pyridoxal 5'-phosphate from ribose 5-phosphate (RBP), glyceraldehyde 3-phosphate (G3P) and ammonia. The ammonia is provided by the PdxT subunit. Can also use ribulose 5-phosphate and dihydroxyacetone phosphate as substrates, resulting from enzyme-catalyzed isomerization of RBP and G3P, respectively.</text>
</comment>
<comment type="catalytic activity">
    <reaction evidence="1">
        <text>aldehydo-D-ribose 5-phosphate + D-glyceraldehyde 3-phosphate + L-glutamine = pyridoxal 5'-phosphate + L-glutamate + phosphate + 3 H2O + H(+)</text>
        <dbReference type="Rhea" id="RHEA:31507"/>
        <dbReference type="ChEBI" id="CHEBI:15377"/>
        <dbReference type="ChEBI" id="CHEBI:15378"/>
        <dbReference type="ChEBI" id="CHEBI:29985"/>
        <dbReference type="ChEBI" id="CHEBI:43474"/>
        <dbReference type="ChEBI" id="CHEBI:58273"/>
        <dbReference type="ChEBI" id="CHEBI:58359"/>
        <dbReference type="ChEBI" id="CHEBI:59776"/>
        <dbReference type="ChEBI" id="CHEBI:597326"/>
        <dbReference type="EC" id="4.3.3.6"/>
    </reaction>
</comment>
<comment type="pathway">
    <text evidence="1">Cofactor biosynthesis; pyridoxal 5'-phosphate biosynthesis.</text>
</comment>
<comment type="subunit">
    <text evidence="1">In the presence of PdxT, forms a dodecamer of heterodimers.</text>
</comment>
<comment type="similarity">
    <text evidence="1">Belongs to the PdxS/SNZ family.</text>
</comment>
<accession>Q6GBW9</accession>
<feature type="chain" id="PRO_0000109415" description="Pyridoxal 5'-phosphate synthase subunit PdxS">
    <location>
        <begin position="1"/>
        <end position="295"/>
    </location>
</feature>
<feature type="active site" description="Schiff-base intermediate with D-ribose 5-phosphate" evidence="1">
    <location>
        <position position="82"/>
    </location>
</feature>
<feature type="binding site" evidence="1">
    <location>
        <position position="25"/>
    </location>
    <ligand>
        <name>D-ribose 5-phosphate</name>
        <dbReference type="ChEBI" id="CHEBI:78346"/>
    </ligand>
</feature>
<feature type="binding site" evidence="1">
    <location>
        <position position="154"/>
    </location>
    <ligand>
        <name>D-ribose 5-phosphate</name>
        <dbReference type="ChEBI" id="CHEBI:78346"/>
    </ligand>
</feature>
<feature type="binding site" evidence="1">
    <location>
        <position position="166"/>
    </location>
    <ligand>
        <name>D-glyceraldehyde 3-phosphate</name>
        <dbReference type="ChEBI" id="CHEBI:59776"/>
    </ligand>
</feature>
<feature type="binding site" evidence="1">
    <location>
        <position position="215"/>
    </location>
    <ligand>
        <name>D-ribose 5-phosphate</name>
        <dbReference type="ChEBI" id="CHEBI:78346"/>
    </ligand>
</feature>
<feature type="binding site" evidence="1">
    <location>
        <begin position="236"/>
        <end position="237"/>
    </location>
    <ligand>
        <name>D-ribose 5-phosphate</name>
        <dbReference type="ChEBI" id="CHEBI:78346"/>
    </ligand>
</feature>
<sequence>MSKIIGSDRVKRGMAEMQKGGVIMDVVNAEQARIAEEAGAVAVMALERVPSDIRAAGGVARMANPKIVEEVMNAVSIPVMAKARIGHITEARVLEAMGVDYIDESEVLTPADEEYHLRKDQFTVPFVCGCRNLGEAARRIGEGAAMLRTKGEPGTGNIVEAVRHMRQVNSEVSRLTVMNDDEIMTFAKDIGAPYEILKQIKDNGRLPVVNFAAGGVATPQDAALMMELGADGVFVGSGIFKSEDPEKFAKAIVQATTHYQDYELIGRLASELGTAMKGLDINQLSLEERMQERGW</sequence>
<proteinExistence type="inferred from homology"/>